<accession>Q0IFX5</accession>
<sequence length="656" mass="73079">MLFKLVTFSRPIQITQTIPLLISQSRRTIARSLSTTSRWLASDDDDTRFDQIPVQRIRNFSIIAHVDHGKSTLADRLLELTGTIAKKAGNKQVLDSLQVEKERGITVKAQTASLVYPYEGETYLLNLIDTPGHVDFSNEVSRSLAACDGVILLVDANEGVQAQTVANFHLARAKQLVIVPVLNKIDLKNARPDAVAQELFTLFEIDPDEVLRISAKIGTGCDAVLKEIVRRLPPPDARREQNFRALIFDSWFDRYRGALNLVFVKDGEIRTGQEIVSCHTGKAYEVKSLAMLRPDERKVDRLVAGQVGLLGCNMRTSKESNIGDTLYAKKDKTCVPLPGFKPQQPMVFAGVYPADQSQHPYLKSAIEKLVLNDSAVTVSPDSSPALGQGWRLGFLGLLHLDVFSQRLQQEYDADPILTAPSVTYRIKLKGAKIIAAHGGNEEIYVSNPALFPDKTMVEEYYEPYVLGTIIAPTECTGPIIGLCVERRAIQKTSINIDNDRIMTTYLMPLNEIVLDFHDQLKSISSGYASFDYEDHGYVPSALVRMDILLNGQLVDELCTVVHISKAQSHAKELVLKLKELIPRQMVQIAIQAVVGGKVVARETLKAYRKDVTSKLYGGDVTRRMKLLKQQSEGKKKMRAIANINVPKDTFINVLKR</sequence>
<keyword id="KW-0342">GTP-binding</keyword>
<keyword id="KW-0378">Hydrolase</keyword>
<keyword id="KW-0472">Membrane</keyword>
<keyword id="KW-0496">Mitochondrion</keyword>
<keyword id="KW-0999">Mitochondrion inner membrane</keyword>
<keyword id="KW-0547">Nucleotide-binding</keyword>
<keyword id="KW-1185">Reference proteome</keyword>
<keyword id="KW-0809">Transit peptide</keyword>
<organism>
    <name type="scientific">Aedes aegypti</name>
    <name type="common">Yellowfever mosquito</name>
    <name type="synonym">Culex aegypti</name>
    <dbReference type="NCBI Taxonomy" id="7159"/>
    <lineage>
        <taxon>Eukaryota</taxon>
        <taxon>Metazoa</taxon>
        <taxon>Ecdysozoa</taxon>
        <taxon>Arthropoda</taxon>
        <taxon>Hexapoda</taxon>
        <taxon>Insecta</taxon>
        <taxon>Pterygota</taxon>
        <taxon>Neoptera</taxon>
        <taxon>Endopterygota</taxon>
        <taxon>Diptera</taxon>
        <taxon>Nematocera</taxon>
        <taxon>Culicoidea</taxon>
        <taxon>Culicidae</taxon>
        <taxon>Culicinae</taxon>
        <taxon>Aedini</taxon>
        <taxon>Aedes</taxon>
        <taxon>Stegomyia</taxon>
    </lineage>
</organism>
<gene>
    <name type="ORF">AAEL003926</name>
</gene>
<proteinExistence type="inferred from homology"/>
<protein>
    <recommendedName>
        <fullName evidence="1">Translation factor GUF1 homolog, mitochondrial</fullName>
        <ecNumber>3.6.5.-</ecNumber>
    </recommendedName>
    <alternativeName>
        <fullName evidence="1">Elongation factor 4 homolog</fullName>
        <shortName evidence="1">EF-4</shortName>
    </alternativeName>
    <alternativeName>
        <fullName evidence="1">GTPase GUF1 homolog</fullName>
    </alternativeName>
    <alternativeName>
        <fullName evidence="1">Ribosomal back-translocase</fullName>
    </alternativeName>
</protein>
<name>GUF1_AEDAE</name>
<reference key="1">
    <citation type="journal article" date="2007" name="Science">
        <title>Genome sequence of Aedes aegypti, a major arbovirus vector.</title>
        <authorList>
            <person name="Nene V."/>
            <person name="Wortman J.R."/>
            <person name="Lawson D."/>
            <person name="Haas B.J."/>
            <person name="Kodira C.D."/>
            <person name="Tu Z.J."/>
            <person name="Loftus B.J."/>
            <person name="Xi Z."/>
            <person name="Megy K."/>
            <person name="Grabherr M."/>
            <person name="Ren Q."/>
            <person name="Zdobnov E.M."/>
            <person name="Lobo N.F."/>
            <person name="Campbell K.S."/>
            <person name="Brown S.E."/>
            <person name="Bonaldo M.F."/>
            <person name="Zhu J."/>
            <person name="Sinkins S.P."/>
            <person name="Hogenkamp D.G."/>
            <person name="Amedeo P."/>
            <person name="Arensburger P."/>
            <person name="Atkinson P.W."/>
            <person name="Bidwell S.L."/>
            <person name="Biedler J."/>
            <person name="Birney E."/>
            <person name="Bruggner R.V."/>
            <person name="Costas J."/>
            <person name="Coy M.R."/>
            <person name="Crabtree J."/>
            <person name="Crawford M."/>
            <person name="DeBruyn B."/>
            <person name="DeCaprio D."/>
            <person name="Eiglmeier K."/>
            <person name="Eisenstadt E."/>
            <person name="El-Dorry H."/>
            <person name="Gelbart W.M."/>
            <person name="Gomes S.L."/>
            <person name="Hammond M."/>
            <person name="Hannick L.I."/>
            <person name="Hogan J.R."/>
            <person name="Holmes M.H."/>
            <person name="Jaffe D."/>
            <person name="Johnston S.J."/>
            <person name="Kennedy R.C."/>
            <person name="Koo H."/>
            <person name="Kravitz S."/>
            <person name="Kriventseva E.V."/>
            <person name="Kulp D."/>
            <person name="Labutti K."/>
            <person name="Lee E."/>
            <person name="Li S."/>
            <person name="Lovin D.D."/>
            <person name="Mao C."/>
            <person name="Mauceli E."/>
            <person name="Menck C.F."/>
            <person name="Miller J.R."/>
            <person name="Montgomery P."/>
            <person name="Mori A."/>
            <person name="Nascimento A.L."/>
            <person name="Naveira H.F."/>
            <person name="Nusbaum C."/>
            <person name="O'Leary S.B."/>
            <person name="Orvis J."/>
            <person name="Pertea M."/>
            <person name="Quesneville H."/>
            <person name="Reidenbach K.R."/>
            <person name="Rogers Y.-H.C."/>
            <person name="Roth C.W."/>
            <person name="Schneider J.R."/>
            <person name="Schatz M."/>
            <person name="Shumway M."/>
            <person name="Stanke M."/>
            <person name="Stinson E.O."/>
            <person name="Tubio J.M.C."/>
            <person name="Vanzee J.P."/>
            <person name="Verjovski-Almeida S."/>
            <person name="Werner D."/>
            <person name="White O.R."/>
            <person name="Wyder S."/>
            <person name="Zeng Q."/>
            <person name="Zhao Q."/>
            <person name="Zhao Y."/>
            <person name="Hill C.A."/>
            <person name="Raikhel A.S."/>
            <person name="Soares M.B."/>
            <person name="Knudson D.L."/>
            <person name="Lee N.H."/>
            <person name="Galagan J."/>
            <person name="Salzberg S.L."/>
            <person name="Paulsen I.T."/>
            <person name="Dimopoulos G."/>
            <person name="Collins F.H."/>
            <person name="Bruce B."/>
            <person name="Fraser-Liggett C.M."/>
            <person name="Severson D.W."/>
        </authorList>
    </citation>
    <scope>NUCLEOTIDE SEQUENCE [LARGE SCALE GENOMIC DNA]</scope>
    <source>
        <strain>LVPib12</strain>
    </source>
</reference>
<comment type="function">
    <text evidence="1">Promotes mitochondrial protein synthesis. May act as a fidelity factor of the translation reaction, by catalyzing a one-codon backward translocation of tRNAs on improperly translocated ribosomes. Binds to mitochondrial ribosomes in a GTP-dependent manner.</text>
</comment>
<comment type="catalytic activity">
    <reaction evidence="1">
        <text>GTP + H2O = GDP + phosphate + H(+)</text>
        <dbReference type="Rhea" id="RHEA:19669"/>
        <dbReference type="ChEBI" id="CHEBI:15377"/>
        <dbReference type="ChEBI" id="CHEBI:15378"/>
        <dbReference type="ChEBI" id="CHEBI:37565"/>
        <dbReference type="ChEBI" id="CHEBI:43474"/>
        <dbReference type="ChEBI" id="CHEBI:58189"/>
    </reaction>
</comment>
<comment type="subcellular location">
    <subcellularLocation>
        <location evidence="1">Mitochondrion inner membrane</location>
        <topology evidence="1">Peripheral membrane protein</topology>
        <orientation evidence="1">Matrix side</orientation>
    </subcellularLocation>
</comment>
<comment type="miscellaneous">
    <text evidence="1">This protein may be expected to contain an N-terminal transit peptide but none has been predicted.</text>
</comment>
<comment type="similarity">
    <text evidence="2">Belongs to the TRAFAC class translation factor GTPase superfamily. Classic translation factor GTPase family. LepA subfamily.</text>
</comment>
<dbReference type="EC" id="3.6.5.-"/>
<dbReference type="EMBL" id="CH477286">
    <property type="protein sequence ID" value="EAT44725.1"/>
    <property type="molecule type" value="Genomic_DNA"/>
</dbReference>
<dbReference type="SMR" id="Q0IFX5"/>
<dbReference type="FunCoup" id="Q0IFX5">
    <property type="interactions" value="1818"/>
</dbReference>
<dbReference type="STRING" id="7159.Q0IFX5"/>
<dbReference type="PaxDb" id="7159-AAEL003926-PA"/>
<dbReference type="EnsemblMetazoa" id="AAEL003926-RA">
    <property type="protein sequence ID" value="AAEL003926-PA"/>
    <property type="gene ID" value="AAEL003926"/>
</dbReference>
<dbReference type="GeneID" id="5563796"/>
<dbReference type="KEGG" id="aag:5563796"/>
<dbReference type="CTD" id="3771960"/>
<dbReference type="VEuPathDB" id="VectorBase:AAEL003926"/>
<dbReference type="eggNOG" id="KOG0462">
    <property type="taxonomic scope" value="Eukaryota"/>
</dbReference>
<dbReference type="HOGENOM" id="CLU_009995_3_3_1"/>
<dbReference type="InParanoid" id="Q0IFX5"/>
<dbReference type="OMA" id="QVKCDEN"/>
<dbReference type="OrthoDB" id="1074at2759"/>
<dbReference type="PhylomeDB" id="Q0IFX5"/>
<dbReference type="Proteomes" id="UP000008820">
    <property type="component" value="Chromosome 2"/>
</dbReference>
<dbReference type="Proteomes" id="UP000682892">
    <property type="component" value="Chromosome 2"/>
</dbReference>
<dbReference type="GO" id="GO:0005743">
    <property type="term" value="C:mitochondrial inner membrane"/>
    <property type="evidence" value="ECO:0007669"/>
    <property type="project" value="UniProtKB-SubCell"/>
</dbReference>
<dbReference type="GO" id="GO:0005759">
    <property type="term" value="C:mitochondrial matrix"/>
    <property type="evidence" value="ECO:0007669"/>
    <property type="project" value="UniProtKB-UniRule"/>
</dbReference>
<dbReference type="GO" id="GO:0005525">
    <property type="term" value="F:GTP binding"/>
    <property type="evidence" value="ECO:0007669"/>
    <property type="project" value="UniProtKB-UniRule"/>
</dbReference>
<dbReference type="GO" id="GO:0003924">
    <property type="term" value="F:GTPase activity"/>
    <property type="evidence" value="ECO:0007669"/>
    <property type="project" value="UniProtKB-UniRule"/>
</dbReference>
<dbReference type="GO" id="GO:0097177">
    <property type="term" value="F:mitochondrial ribosome binding"/>
    <property type="evidence" value="ECO:0007669"/>
    <property type="project" value="TreeGrafter"/>
</dbReference>
<dbReference type="GO" id="GO:0045727">
    <property type="term" value="P:positive regulation of translation"/>
    <property type="evidence" value="ECO:0007669"/>
    <property type="project" value="UniProtKB-UniRule"/>
</dbReference>
<dbReference type="CDD" id="cd03699">
    <property type="entry name" value="EF4_II"/>
    <property type="match status" value="1"/>
</dbReference>
<dbReference type="CDD" id="cd16260">
    <property type="entry name" value="EF4_III"/>
    <property type="match status" value="1"/>
</dbReference>
<dbReference type="CDD" id="cd01890">
    <property type="entry name" value="LepA"/>
    <property type="match status" value="1"/>
</dbReference>
<dbReference type="CDD" id="cd03709">
    <property type="entry name" value="lepA_C"/>
    <property type="match status" value="1"/>
</dbReference>
<dbReference type="FunFam" id="3.40.50.300:FF:000078">
    <property type="entry name" value="Elongation factor 4"/>
    <property type="match status" value="1"/>
</dbReference>
<dbReference type="FunFam" id="2.40.30.10:FF:000015">
    <property type="entry name" value="Translation factor GUF1, mitochondrial"/>
    <property type="match status" value="1"/>
</dbReference>
<dbReference type="FunFam" id="3.30.70.240:FF:000007">
    <property type="entry name" value="Translation factor GUF1, mitochondrial"/>
    <property type="match status" value="1"/>
</dbReference>
<dbReference type="FunFam" id="3.30.70.2570:FF:000001">
    <property type="entry name" value="Translation factor GUF1, mitochondrial"/>
    <property type="match status" value="1"/>
</dbReference>
<dbReference type="FunFam" id="3.30.70.870:FF:000004">
    <property type="entry name" value="Translation factor GUF1, mitochondrial"/>
    <property type="match status" value="1"/>
</dbReference>
<dbReference type="Gene3D" id="3.30.70.240">
    <property type="match status" value="1"/>
</dbReference>
<dbReference type="Gene3D" id="3.30.70.2570">
    <property type="entry name" value="Elongation factor 4, C-terminal domain"/>
    <property type="match status" value="1"/>
</dbReference>
<dbReference type="Gene3D" id="3.30.70.870">
    <property type="entry name" value="Elongation Factor G (Translational Gtpase), domain 3"/>
    <property type="match status" value="1"/>
</dbReference>
<dbReference type="Gene3D" id="3.40.50.300">
    <property type="entry name" value="P-loop containing nucleotide triphosphate hydrolases"/>
    <property type="match status" value="1"/>
</dbReference>
<dbReference type="Gene3D" id="2.40.30.10">
    <property type="entry name" value="Translation factors"/>
    <property type="match status" value="1"/>
</dbReference>
<dbReference type="HAMAP" id="MF_00071">
    <property type="entry name" value="LepA"/>
    <property type="match status" value="1"/>
</dbReference>
<dbReference type="InterPro" id="IPR006297">
    <property type="entry name" value="EF-4"/>
</dbReference>
<dbReference type="InterPro" id="IPR035647">
    <property type="entry name" value="EFG_III/V"/>
</dbReference>
<dbReference type="InterPro" id="IPR000640">
    <property type="entry name" value="EFG_V-like"/>
</dbReference>
<dbReference type="InterPro" id="IPR031157">
    <property type="entry name" value="G_TR_CS"/>
</dbReference>
<dbReference type="InterPro" id="IPR038363">
    <property type="entry name" value="LepA_C_sf"/>
</dbReference>
<dbReference type="InterPro" id="IPR013842">
    <property type="entry name" value="LepA_CTD"/>
</dbReference>
<dbReference type="InterPro" id="IPR035654">
    <property type="entry name" value="LepA_IV"/>
</dbReference>
<dbReference type="InterPro" id="IPR027417">
    <property type="entry name" value="P-loop_NTPase"/>
</dbReference>
<dbReference type="InterPro" id="IPR005225">
    <property type="entry name" value="Small_GTP-bd"/>
</dbReference>
<dbReference type="InterPro" id="IPR000795">
    <property type="entry name" value="T_Tr_GTP-bd_dom"/>
</dbReference>
<dbReference type="InterPro" id="IPR009000">
    <property type="entry name" value="Transl_B-barrel_sf"/>
</dbReference>
<dbReference type="NCBIfam" id="TIGR01393">
    <property type="entry name" value="lepA"/>
    <property type="match status" value="1"/>
</dbReference>
<dbReference type="NCBIfam" id="TIGR00231">
    <property type="entry name" value="small_GTP"/>
    <property type="match status" value="1"/>
</dbReference>
<dbReference type="PANTHER" id="PTHR43512:SF7">
    <property type="entry name" value="TRANSLATION FACTOR GUF1, MITOCHONDRIAL"/>
    <property type="match status" value="1"/>
</dbReference>
<dbReference type="PANTHER" id="PTHR43512">
    <property type="entry name" value="TRANSLATION FACTOR GUF1-RELATED"/>
    <property type="match status" value="1"/>
</dbReference>
<dbReference type="Pfam" id="PF00679">
    <property type="entry name" value="EFG_C"/>
    <property type="match status" value="1"/>
</dbReference>
<dbReference type="Pfam" id="PF00009">
    <property type="entry name" value="GTP_EFTU"/>
    <property type="match status" value="1"/>
</dbReference>
<dbReference type="Pfam" id="PF06421">
    <property type="entry name" value="LepA_C"/>
    <property type="match status" value="1"/>
</dbReference>
<dbReference type="PRINTS" id="PR00315">
    <property type="entry name" value="ELONGATNFCT"/>
</dbReference>
<dbReference type="SUPFAM" id="SSF54980">
    <property type="entry name" value="EF-G C-terminal domain-like"/>
    <property type="match status" value="2"/>
</dbReference>
<dbReference type="SUPFAM" id="SSF52540">
    <property type="entry name" value="P-loop containing nucleoside triphosphate hydrolases"/>
    <property type="match status" value="1"/>
</dbReference>
<dbReference type="SUPFAM" id="SSF50447">
    <property type="entry name" value="Translation proteins"/>
    <property type="match status" value="1"/>
</dbReference>
<dbReference type="PROSITE" id="PS00301">
    <property type="entry name" value="G_TR_1"/>
    <property type="match status" value="1"/>
</dbReference>
<dbReference type="PROSITE" id="PS51722">
    <property type="entry name" value="G_TR_2"/>
    <property type="match status" value="1"/>
</dbReference>
<evidence type="ECO:0000255" key="1">
    <source>
        <dbReference type="HAMAP-Rule" id="MF_03137"/>
    </source>
</evidence>
<evidence type="ECO:0000305" key="2"/>
<feature type="chain" id="PRO_0000402836" description="Translation factor GUF1 homolog, mitochondrial">
    <location>
        <begin position="1"/>
        <end position="656"/>
    </location>
</feature>
<feature type="domain" description="tr-type G">
    <location>
        <begin position="55"/>
        <end position="236"/>
    </location>
</feature>
<feature type="binding site" evidence="1">
    <location>
        <begin position="64"/>
        <end position="71"/>
    </location>
    <ligand>
        <name>GTP</name>
        <dbReference type="ChEBI" id="CHEBI:37565"/>
    </ligand>
</feature>
<feature type="binding site" evidence="1">
    <location>
        <begin position="129"/>
        <end position="133"/>
    </location>
    <ligand>
        <name>GTP</name>
        <dbReference type="ChEBI" id="CHEBI:37565"/>
    </ligand>
</feature>
<feature type="binding site" evidence="1">
    <location>
        <begin position="183"/>
        <end position="186"/>
    </location>
    <ligand>
        <name>GTP</name>
        <dbReference type="ChEBI" id="CHEBI:37565"/>
    </ligand>
</feature>